<reference key="1">
    <citation type="journal article" date="2003" name="J. Bacteriol.">
        <title>Complete genome sequence of the oral pathogenic bacterium Porphyromonas gingivalis strain W83.</title>
        <authorList>
            <person name="Nelson K.E."/>
            <person name="Fleischmann R.D."/>
            <person name="DeBoy R.T."/>
            <person name="Paulsen I.T."/>
            <person name="Fouts D.E."/>
            <person name="Eisen J.A."/>
            <person name="Daugherty S.C."/>
            <person name="Dodson R.J."/>
            <person name="Durkin A.S."/>
            <person name="Gwinn M.L."/>
            <person name="Haft D.H."/>
            <person name="Kolonay J.F."/>
            <person name="Nelson W.C."/>
            <person name="Mason T.M."/>
            <person name="Tallon L."/>
            <person name="Gray J."/>
            <person name="Granger D."/>
            <person name="Tettelin H."/>
            <person name="Dong H."/>
            <person name="Galvin J.L."/>
            <person name="Duncan M.J."/>
            <person name="Dewhirst F.E."/>
            <person name="Fraser C.M."/>
        </authorList>
    </citation>
    <scope>NUCLEOTIDE SEQUENCE [LARGE SCALE GENOMIC DNA]</scope>
    <source>
        <strain>ATCC BAA-308 / W83</strain>
    </source>
</reference>
<proteinExistence type="inferred from homology"/>
<feature type="chain" id="PRO_0000176814" description="Small ribosomal subunit protein bS6">
    <location>
        <begin position="1"/>
        <end position="117"/>
    </location>
</feature>
<protein>
    <recommendedName>
        <fullName evidence="1">Small ribosomal subunit protein bS6</fullName>
    </recommendedName>
    <alternativeName>
        <fullName evidence="2">30S ribosomal protein S6</fullName>
    </alternativeName>
</protein>
<dbReference type="EMBL" id="AE015924">
    <property type="protein sequence ID" value="AAQ65781.1"/>
    <property type="molecule type" value="Genomic_DNA"/>
</dbReference>
<dbReference type="RefSeq" id="WP_004585132.1">
    <property type="nucleotide sequence ID" value="NC_002950.2"/>
</dbReference>
<dbReference type="SMR" id="Q7MWL3"/>
<dbReference type="STRING" id="242619.PG_0595"/>
<dbReference type="EnsemblBacteria" id="AAQ65781">
    <property type="protein sequence ID" value="AAQ65781"/>
    <property type="gene ID" value="PG_0595"/>
</dbReference>
<dbReference type="GeneID" id="29255865"/>
<dbReference type="GeneID" id="57239193"/>
<dbReference type="KEGG" id="pgi:PG_0595"/>
<dbReference type="eggNOG" id="COG0360">
    <property type="taxonomic scope" value="Bacteria"/>
</dbReference>
<dbReference type="HOGENOM" id="CLU_113441_4_3_10"/>
<dbReference type="Proteomes" id="UP000000588">
    <property type="component" value="Chromosome"/>
</dbReference>
<dbReference type="GO" id="GO:0005737">
    <property type="term" value="C:cytoplasm"/>
    <property type="evidence" value="ECO:0007669"/>
    <property type="project" value="UniProtKB-ARBA"/>
</dbReference>
<dbReference type="GO" id="GO:1990904">
    <property type="term" value="C:ribonucleoprotein complex"/>
    <property type="evidence" value="ECO:0007669"/>
    <property type="project" value="UniProtKB-KW"/>
</dbReference>
<dbReference type="GO" id="GO:0005840">
    <property type="term" value="C:ribosome"/>
    <property type="evidence" value="ECO:0007669"/>
    <property type="project" value="UniProtKB-KW"/>
</dbReference>
<dbReference type="GO" id="GO:0070181">
    <property type="term" value="F:small ribosomal subunit rRNA binding"/>
    <property type="evidence" value="ECO:0007669"/>
    <property type="project" value="TreeGrafter"/>
</dbReference>
<dbReference type="GO" id="GO:0003735">
    <property type="term" value="F:structural constituent of ribosome"/>
    <property type="evidence" value="ECO:0007669"/>
    <property type="project" value="InterPro"/>
</dbReference>
<dbReference type="GO" id="GO:0006412">
    <property type="term" value="P:translation"/>
    <property type="evidence" value="ECO:0007669"/>
    <property type="project" value="UniProtKB-UniRule"/>
</dbReference>
<dbReference type="CDD" id="cd00473">
    <property type="entry name" value="bS6"/>
    <property type="match status" value="1"/>
</dbReference>
<dbReference type="Gene3D" id="3.30.70.60">
    <property type="match status" value="1"/>
</dbReference>
<dbReference type="HAMAP" id="MF_00360">
    <property type="entry name" value="Ribosomal_bS6"/>
    <property type="match status" value="1"/>
</dbReference>
<dbReference type="InterPro" id="IPR000529">
    <property type="entry name" value="Ribosomal_bS6"/>
</dbReference>
<dbReference type="InterPro" id="IPR035980">
    <property type="entry name" value="Ribosomal_bS6_sf"/>
</dbReference>
<dbReference type="InterPro" id="IPR020814">
    <property type="entry name" value="Ribosomal_S6_plastid/chlpt"/>
</dbReference>
<dbReference type="InterPro" id="IPR014717">
    <property type="entry name" value="Transl_elong_EF1B/ribsomal_bS6"/>
</dbReference>
<dbReference type="NCBIfam" id="TIGR00166">
    <property type="entry name" value="S6"/>
    <property type="match status" value="1"/>
</dbReference>
<dbReference type="PANTHER" id="PTHR21011">
    <property type="entry name" value="MITOCHONDRIAL 28S RIBOSOMAL PROTEIN S6"/>
    <property type="match status" value="1"/>
</dbReference>
<dbReference type="PANTHER" id="PTHR21011:SF1">
    <property type="entry name" value="SMALL RIBOSOMAL SUBUNIT PROTEIN BS6M"/>
    <property type="match status" value="1"/>
</dbReference>
<dbReference type="Pfam" id="PF01250">
    <property type="entry name" value="Ribosomal_S6"/>
    <property type="match status" value="1"/>
</dbReference>
<dbReference type="SUPFAM" id="SSF54995">
    <property type="entry name" value="Ribosomal protein S6"/>
    <property type="match status" value="1"/>
</dbReference>
<keyword id="KW-1185">Reference proteome</keyword>
<keyword id="KW-0687">Ribonucleoprotein</keyword>
<keyword id="KW-0689">Ribosomal protein</keyword>
<keyword id="KW-0694">RNA-binding</keyword>
<keyword id="KW-0699">rRNA-binding</keyword>
<name>RS6_PORGI</name>
<sequence>MNNYETVFILTPVLSDAQMKEAVDKFTGLLKQEGAVIVNEENWGLRKLAYPIQKKSTGFYQLVEFQANPDVIAKLETNFRRDERVIRFLTFRQDKFAAEYAAKRRSLKAKTEEVKEA</sequence>
<accession>Q7MWL3</accession>
<comment type="function">
    <text evidence="1">Binds together with bS18 to 16S ribosomal RNA.</text>
</comment>
<comment type="similarity">
    <text evidence="1">Belongs to the bacterial ribosomal protein bS6 family.</text>
</comment>
<evidence type="ECO:0000255" key="1">
    <source>
        <dbReference type="HAMAP-Rule" id="MF_00360"/>
    </source>
</evidence>
<evidence type="ECO:0000305" key="2"/>
<gene>
    <name evidence="1" type="primary">rpsF</name>
    <name type="ordered locus">PG_0595</name>
</gene>
<organism>
    <name type="scientific">Porphyromonas gingivalis (strain ATCC BAA-308 / W83)</name>
    <dbReference type="NCBI Taxonomy" id="242619"/>
    <lineage>
        <taxon>Bacteria</taxon>
        <taxon>Pseudomonadati</taxon>
        <taxon>Bacteroidota</taxon>
        <taxon>Bacteroidia</taxon>
        <taxon>Bacteroidales</taxon>
        <taxon>Porphyromonadaceae</taxon>
        <taxon>Porphyromonas</taxon>
    </lineage>
</organism>